<comment type="function">
    <text evidence="1">Enables the recognition and targeting of unfolded and aggregated proteins to the ClpC protease or to other proteins involved in proteolysis.</text>
</comment>
<comment type="subunit">
    <text evidence="1">Homodimer.</text>
</comment>
<comment type="domain">
    <text>The N-terminal domain probably binds unfolded/aggregated proteins; the C-terminal domain interacts with ClpC.</text>
</comment>
<comment type="similarity">
    <text evidence="1">Belongs to the MecA family.</text>
</comment>
<gene>
    <name evidence="1" type="primary">mecA</name>
    <name type="ordered locus">SAB0865</name>
</gene>
<evidence type="ECO:0000255" key="1">
    <source>
        <dbReference type="HAMAP-Rule" id="MF_01124"/>
    </source>
</evidence>
<evidence type="ECO:0000256" key="2">
    <source>
        <dbReference type="SAM" id="MobiDB-lite"/>
    </source>
</evidence>
<feature type="chain" id="PRO_1000065348" description="Adapter protein MecA">
    <location>
        <begin position="1"/>
        <end position="239"/>
    </location>
</feature>
<feature type="region of interest" description="Disordered" evidence="2">
    <location>
        <begin position="118"/>
        <end position="137"/>
    </location>
</feature>
<feature type="compositionally biased region" description="Basic and acidic residues" evidence="2">
    <location>
        <begin position="118"/>
        <end position="128"/>
    </location>
</feature>
<reference key="1">
    <citation type="journal article" date="2007" name="PLoS ONE">
        <title>Molecular correlates of host specialization in Staphylococcus aureus.</title>
        <authorList>
            <person name="Herron-Olson L."/>
            <person name="Fitzgerald J.R."/>
            <person name="Musser J.M."/>
            <person name="Kapur V."/>
        </authorList>
    </citation>
    <scope>NUCLEOTIDE SEQUENCE [LARGE SCALE GENOMIC DNA]</scope>
    <source>
        <strain>bovine RF122 / ET3-1</strain>
    </source>
</reference>
<dbReference type="EMBL" id="AJ938182">
    <property type="protein sequence ID" value="CAI80553.1"/>
    <property type="molecule type" value="Genomic_DNA"/>
</dbReference>
<dbReference type="RefSeq" id="WP_001217733.1">
    <property type="nucleotide sequence ID" value="NC_007622.1"/>
</dbReference>
<dbReference type="SMR" id="Q2YWY4"/>
<dbReference type="KEGG" id="sab:SAB0865"/>
<dbReference type="HOGENOM" id="CLU_071496_2_1_9"/>
<dbReference type="GO" id="GO:0030674">
    <property type="term" value="F:protein-macromolecule adaptor activity"/>
    <property type="evidence" value="ECO:0007669"/>
    <property type="project" value="UniProtKB-UniRule"/>
</dbReference>
<dbReference type="Gene3D" id="3.30.70.1950">
    <property type="match status" value="1"/>
</dbReference>
<dbReference type="HAMAP" id="MF_01124">
    <property type="entry name" value="MecA"/>
    <property type="match status" value="1"/>
</dbReference>
<dbReference type="InterPro" id="IPR038471">
    <property type="entry name" value="MecA_C_sf"/>
</dbReference>
<dbReference type="InterPro" id="IPR008681">
    <property type="entry name" value="Neg-reg_MecA"/>
</dbReference>
<dbReference type="NCBIfam" id="NF002642">
    <property type="entry name" value="PRK02315.1-3"/>
    <property type="match status" value="1"/>
</dbReference>
<dbReference type="NCBIfam" id="NF002644">
    <property type="entry name" value="PRK02315.1-5"/>
    <property type="match status" value="1"/>
</dbReference>
<dbReference type="PANTHER" id="PTHR39161">
    <property type="entry name" value="ADAPTER PROTEIN MECA"/>
    <property type="match status" value="1"/>
</dbReference>
<dbReference type="PANTHER" id="PTHR39161:SF1">
    <property type="entry name" value="ADAPTER PROTEIN MECA 1"/>
    <property type="match status" value="1"/>
</dbReference>
<dbReference type="Pfam" id="PF05389">
    <property type="entry name" value="MecA"/>
    <property type="match status" value="1"/>
</dbReference>
<dbReference type="PIRSF" id="PIRSF029008">
    <property type="entry name" value="MecA"/>
    <property type="match status" value="1"/>
</dbReference>
<name>MECA_STAAB</name>
<sequence length="239" mass="28313">MRIERVDDTTVKLFITYSDIEARGFSREDLWTNRKRGEEFFWSMMDEINEEEDFVVEGPLWIQVHAFEKGVEVTISKSKNEDMMNMSDDDATDQFDEQVQELLAQTLEGEDQLEELFEQRTKEKEAQGSKRQKSSARKNTRTIIVKFNDLEDVINYAYHTNPITTEFEDLLYMVDGTYYYAVHFDSHVDQEVINDSYSQLLEFAYPTDRTEVYLNDYAKIIMSHNVTAQVRRYFPETTE</sequence>
<accession>Q2YWY4</accession>
<proteinExistence type="inferred from homology"/>
<organism>
    <name type="scientific">Staphylococcus aureus (strain bovine RF122 / ET3-1)</name>
    <dbReference type="NCBI Taxonomy" id="273036"/>
    <lineage>
        <taxon>Bacteria</taxon>
        <taxon>Bacillati</taxon>
        <taxon>Bacillota</taxon>
        <taxon>Bacilli</taxon>
        <taxon>Bacillales</taxon>
        <taxon>Staphylococcaceae</taxon>
        <taxon>Staphylococcus</taxon>
    </lineage>
</organism>
<protein>
    <recommendedName>
        <fullName evidence="1">Adapter protein MecA</fullName>
    </recommendedName>
</protein>